<name>AROC_CARHZ</name>
<accession>Q3AEF4</accession>
<reference key="1">
    <citation type="journal article" date="2005" name="PLoS Genet.">
        <title>Life in hot carbon monoxide: the complete genome sequence of Carboxydothermus hydrogenoformans Z-2901.</title>
        <authorList>
            <person name="Wu M."/>
            <person name="Ren Q."/>
            <person name="Durkin A.S."/>
            <person name="Daugherty S.C."/>
            <person name="Brinkac L.M."/>
            <person name="Dodson R.J."/>
            <person name="Madupu R."/>
            <person name="Sullivan S.A."/>
            <person name="Kolonay J.F."/>
            <person name="Nelson W.C."/>
            <person name="Tallon L.J."/>
            <person name="Jones K.M."/>
            <person name="Ulrich L.E."/>
            <person name="Gonzalez J.M."/>
            <person name="Zhulin I.B."/>
            <person name="Robb F.T."/>
            <person name="Eisen J.A."/>
        </authorList>
    </citation>
    <scope>NUCLEOTIDE SEQUENCE [LARGE SCALE GENOMIC DNA]</scope>
    <source>
        <strain>ATCC BAA-161 / DSM 6008 / Z-2901</strain>
    </source>
</reference>
<gene>
    <name evidence="1" type="primary">aroC</name>
    <name type="ordered locus">CHY_0624</name>
</gene>
<dbReference type="EC" id="4.2.3.5" evidence="1"/>
<dbReference type="EMBL" id="CP000141">
    <property type="protein sequence ID" value="ABB15238.1"/>
    <property type="molecule type" value="Genomic_DNA"/>
</dbReference>
<dbReference type="RefSeq" id="WP_011343556.1">
    <property type="nucleotide sequence ID" value="NC_007503.1"/>
</dbReference>
<dbReference type="SMR" id="Q3AEF4"/>
<dbReference type="FunCoup" id="Q3AEF4">
    <property type="interactions" value="403"/>
</dbReference>
<dbReference type="STRING" id="246194.CHY_0624"/>
<dbReference type="KEGG" id="chy:CHY_0624"/>
<dbReference type="eggNOG" id="COG0082">
    <property type="taxonomic scope" value="Bacteria"/>
</dbReference>
<dbReference type="HOGENOM" id="CLU_034547_2_0_9"/>
<dbReference type="InParanoid" id="Q3AEF4"/>
<dbReference type="OrthoDB" id="9771806at2"/>
<dbReference type="UniPathway" id="UPA00053">
    <property type="reaction ID" value="UER00090"/>
</dbReference>
<dbReference type="Proteomes" id="UP000002706">
    <property type="component" value="Chromosome"/>
</dbReference>
<dbReference type="GO" id="GO:0005829">
    <property type="term" value="C:cytosol"/>
    <property type="evidence" value="ECO:0007669"/>
    <property type="project" value="TreeGrafter"/>
</dbReference>
<dbReference type="GO" id="GO:0004107">
    <property type="term" value="F:chorismate synthase activity"/>
    <property type="evidence" value="ECO:0007669"/>
    <property type="project" value="UniProtKB-UniRule"/>
</dbReference>
<dbReference type="GO" id="GO:0010181">
    <property type="term" value="F:FMN binding"/>
    <property type="evidence" value="ECO:0007669"/>
    <property type="project" value="TreeGrafter"/>
</dbReference>
<dbReference type="GO" id="GO:0008652">
    <property type="term" value="P:amino acid biosynthetic process"/>
    <property type="evidence" value="ECO:0007669"/>
    <property type="project" value="UniProtKB-KW"/>
</dbReference>
<dbReference type="GO" id="GO:0009073">
    <property type="term" value="P:aromatic amino acid family biosynthetic process"/>
    <property type="evidence" value="ECO:0007669"/>
    <property type="project" value="UniProtKB-KW"/>
</dbReference>
<dbReference type="GO" id="GO:0009423">
    <property type="term" value="P:chorismate biosynthetic process"/>
    <property type="evidence" value="ECO:0007669"/>
    <property type="project" value="UniProtKB-UniRule"/>
</dbReference>
<dbReference type="CDD" id="cd07304">
    <property type="entry name" value="Chorismate_synthase"/>
    <property type="match status" value="1"/>
</dbReference>
<dbReference type="FunFam" id="3.60.150.10:FF:000002">
    <property type="entry name" value="Chorismate synthase"/>
    <property type="match status" value="1"/>
</dbReference>
<dbReference type="Gene3D" id="3.60.150.10">
    <property type="entry name" value="Chorismate synthase AroC"/>
    <property type="match status" value="1"/>
</dbReference>
<dbReference type="HAMAP" id="MF_00300">
    <property type="entry name" value="Chorismate_synth"/>
    <property type="match status" value="1"/>
</dbReference>
<dbReference type="InterPro" id="IPR000453">
    <property type="entry name" value="Chorismate_synth"/>
</dbReference>
<dbReference type="InterPro" id="IPR035904">
    <property type="entry name" value="Chorismate_synth_AroC_sf"/>
</dbReference>
<dbReference type="InterPro" id="IPR020541">
    <property type="entry name" value="Chorismate_synthase_CS"/>
</dbReference>
<dbReference type="NCBIfam" id="TIGR00033">
    <property type="entry name" value="aroC"/>
    <property type="match status" value="1"/>
</dbReference>
<dbReference type="NCBIfam" id="NF003793">
    <property type="entry name" value="PRK05382.1"/>
    <property type="match status" value="1"/>
</dbReference>
<dbReference type="PANTHER" id="PTHR21085">
    <property type="entry name" value="CHORISMATE SYNTHASE"/>
    <property type="match status" value="1"/>
</dbReference>
<dbReference type="PANTHER" id="PTHR21085:SF0">
    <property type="entry name" value="CHORISMATE SYNTHASE"/>
    <property type="match status" value="1"/>
</dbReference>
<dbReference type="Pfam" id="PF01264">
    <property type="entry name" value="Chorismate_synt"/>
    <property type="match status" value="1"/>
</dbReference>
<dbReference type="PIRSF" id="PIRSF001456">
    <property type="entry name" value="Chorismate_synth"/>
    <property type="match status" value="1"/>
</dbReference>
<dbReference type="SUPFAM" id="SSF103263">
    <property type="entry name" value="Chorismate synthase, AroC"/>
    <property type="match status" value="1"/>
</dbReference>
<dbReference type="PROSITE" id="PS00788">
    <property type="entry name" value="CHORISMATE_SYNTHASE_2"/>
    <property type="match status" value="1"/>
</dbReference>
<proteinExistence type="inferred from homology"/>
<evidence type="ECO:0000255" key="1">
    <source>
        <dbReference type="HAMAP-Rule" id="MF_00300"/>
    </source>
</evidence>
<keyword id="KW-0028">Amino-acid biosynthesis</keyword>
<keyword id="KW-0057">Aromatic amino acid biosynthesis</keyword>
<keyword id="KW-0274">FAD</keyword>
<keyword id="KW-0285">Flavoprotein</keyword>
<keyword id="KW-0288">FMN</keyword>
<keyword id="KW-0456">Lyase</keyword>
<keyword id="KW-0521">NADP</keyword>
<keyword id="KW-1185">Reference proteome</keyword>
<feature type="chain" id="PRO_0000256282" description="Chorismate synthase">
    <location>
        <begin position="1"/>
        <end position="384"/>
    </location>
</feature>
<feature type="binding site" evidence="1">
    <location>
        <position position="40"/>
    </location>
    <ligand>
        <name>NADP(+)</name>
        <dbReference type="ChEBI" id="CHEBI:58349"/>
    </ligand>
</feature>
<feature type="binding site" evidence="1">
    <location>
        <position position="46"/>
    </location>
    <ligand>
        <name>NADP(+)</name>
        <dbReference type="ChEBI" id="CHEBI:58349"/>
    </ligand>
</feature>
<feature type="binding site" evidence="1">
    <location>
        <begin position="128"/>
        <end position="130"/>
    </location>
    <ligand>
        <name>FMN</name>
        <dbReference type="ChEBI" id="CHEBI:58210"/>
    </ligand>
</feature>
<feature type="binding site" evidence="1">
    <location>
        <position position="292"/>
    </location>
    <ligand>
        <name>FMN</name>
        <dbReference type="ChEBI" id="CHEBI:58210"/>
    </ligand>
</feature>
<feature type="binding site" evidence="1">
    <location>
        <begin position="307"/>
        <end position="311"/>
    </location>
    <ligand>
        <name>FMN</name>
        <dbReference type="ChEBI" id="CHEBI:58210"/>
    </ligand>
</feature>
<feature type="binding site" evidence="1">
    <location>
        <position position="333"/>
    </location>
    <ligand>
        <name>FMN</name>
        <dbReference type="ChEBI" id="CHEBI:58210"/>
    </ligand>
</feature>
<protein>
    <recommendedName>
        <fullName evidence="1">Chorismate synthase</fullName>
        <shortName evidence="1">CS</shortName>
        <ecNumber evidence="1">4.2.3.5</ecNumber>
    </recommendedName>
    <alternativeName>
        <fullName evidence="1">5-enolpyruvylshikimate-3-phosphate phospholyase</fullName>
    </alternativeName>
</protein>
<comment type="function">
    <text evidence="1">Catalyzes the anti-1,4-elimination of the C-3 phosphate and the C-6 proR hydrogen from 5-enolpyruvylshikimate-3-phosphate (EPSP) to yield chorismate, which is the branch point compound that serves as the starting substrate for the three terminal pathways of aromatic amino acid biosynthesis. This reaction introduces a second double bond into the aromatic ring system.</text>
</comment>
<comment type="catalytic activity">
    <reaction evidence="1">
        <text>5-O-(1-carboxyvinyl)-3-phosphoshikimate = chorismate + phosphate</text>
        <dbReference type="Rhea" id="RHEA:21020"/>
        <dbReference type="ChEBI" id="CHEBI:29748"/>
        <dbReference type="ChEBI" id="CHEBI:43474"/>
        <dbReference type="ChEBI" id="CHEBI:57701"/>
        <dbReference type="EC" id="4.2.3.5"/>
    </reaction>
</comment>
<comment type="cofactor">
    <cofactor evidence="1">
        <name>FMNH2</name>
        <dbReference type="ChEBI" id="CHEBI:57618"/>
    </cofactor>
    <text evidence="1">Reduced FMN (FMNH(2)).</text>
</comment>
<comment type="pathway">
    <text evidence="1">Metabolic intermediate biosynthesis; chorismate biosynthesis; chorismate from D-erythrose 4-phosphate and phosphoenolpyruvate: step 7/7.</text>
</comment>
<comment type="subunit">
    <text evidence="1">Homotetramer.</text>
</comment>
<comment type="similarity">
    <text evidence="1">Belongs to the chorismate synthase family.</text>
</comment>
<organism>
    <name type="scientific">Carboxydothermus hydrogenoformans (strain ATCC BAA-161 / DSM 6008 / Z-2901)</name>
    <dbReference type="NCBI Taxonomy" id="246194"/>
    <lineage>
        <taxon>Bacteria</taxon>
        <taxon>Bacillati</taxon>
        <taxon>Bacillota</taxon>
        <taxon>Clostridia</taxon>
        <taxon>Thermoanaerobacterales</taxon>
        <taxon>Thermoanaerobacteraceae</taxon>
        <taxon>Carboxydothermus</taxon>
    </lineage>
</organism>
<sequence>MFRYLTSGESHGEGLYVILEGVPAGLKVDLDYINHELSRRQLGYGRGERMKIEKDEAQILTGVRGGFATGAPITIKVKNRDYENWEKFMRTTGEIEPGREVTVPRPGHADLAGGLKYGHKDLRNVLERASARETAVRVAAGAVAKLFLAEFGVRIYSHVLRIGSVEVEYPGGLPEEELKKADEHPLRCLDAQVEGRMLKWVDRARENGDTLGGIFEVVVFGLPPGLGSYVHWDRKLDGRLAGALMAIPSAKGVEIGDGIALANIPGRMAVDEIYYENGHFYRKTNKAGGLEGGVTNGMPLIAKVSLKPIPTQVKPLKSVDIVTKETKPAQVERSDITAVPAAGVVGEAVTALVLMESFLEKFGGDRIEETKRNYQNYLQSIANY</sequence>